<reference key="1">
    <citation type="journal article" date="1995" name="J. Biol. Chem.">
        <title>A novel beta subunit increases rate of inactivation of specific voltage-gated potassium channel alpha subunits.</title>
        <authorList>
            <person name="Morales M.J."/>
            <person name="Castellino R.C."/>
            <person name="Crews A.L."/>
            <person name="Rasmusson R.L."/>
            <person name="Strauss H.C."/>
        </authorList>
    </citation>
    <scope>NUCLEOTIDE SEQUENCE [MRNA]</scope>
    <scope>FUNCTION</scope>
    <scope>TISSUE SPECIFICITY</scope>
    <source>
        <tissue>Heart</tissue>
    </source>
</reference>
<dbReference type="EC" id="1.1.1.-" evidence="2"/>
<dbReference type="EMBL" id="U17966">
    <property type="protein sequence ID" value="AAC48462.1"/>
    <property type="molecule type" value="mRNA"/>
</dbReference>
<dbReference type="SMR" id="Q28528"/>
<dbReference type="GO" id="GO:0009898">
    <property type="term" value="C:cytoplasmic side of plasma membrane"/>
    <property type="evidence" value="ECO:0000250"/>
    <property type="project" value="UniProtKB"/>
</dbReference>
<dbReference type="GO" id="GO:0005829">
    <property type="term" value="C:cytosol"/>
    <property type="evidence" value="ECO:0000250"/>
    <property type="project" value="UniProtKB"/>
</dbReference>
<dbReference type="GO" id="GO:0044224">
    <property type="term" value="C:juxtaparanode region of axon"/>
    <property type="evidence" value="ECO:0007669"/>
    <property type="project" value="TreeGrafter"/>
</dbReference>
<dbReference type="GO" id="GO:0034705">
    <property type="term" value="C:potassium channel complex"/>
    <property type="evidence" value="ECO:0000250"/>
    <property type="project" value="UniProtKB"/>
</dbReference>
<dbReference type="GO" id="GO:0008076">
    <property type="term" value="C:voltage-gated potassium channel complex"/>
    <property type="evidence" value="ECO:0007669"/>
    <property type="project" value="TreeGrafter"/>
</dbReference>
<dbReference type="GO" id="GO:0004033">
    <property type="term" value="F:aldo-keto reductase (NADPH) activity"/>
    <property type="evidence" value="ECO:0000250"/>
    <property type="project" value="UniProtKB"/>
</dbReference>
<dbReference type="GO" id="GO:0004090">
    <property type="term" value="F:carbonyl reductase (NADPH) activity"/>
    <property type="evidence" value="ECO:0007669"/>
    <property type="project" value="RHEA"/>
</dbReference>
<dbReference type="GO" id="GO:0070402">
    <property type="term" value="F:NADPH binding"/>
    <property type="evidence" value="ECO:0000250"/>
    <property type="project" value="UniProtKB"/>
</dbReference>
<dbReference type="GO" id="GO:0015459">
    <property type="term" value="F:potassium channel regulator activity"/>
    <property type="evidence" value="ECO:0000250"/>
    <property type="project" value="UniProtKB"/>
</dbReference>
<dbReference type="GO" id="GO:0044325">
    <property type="term" value="F:transmembrane transporter binding"/>
    <property type="evidence" value="ECO:0007669"/>
    <property type="project" value="TreeGrafter"/>
</dbReference>
<dbReference type="GO" id="GO:0005249">
    <property type="term" value="F:voltage-gated potassium channel activity"/>
    <property type="evidence" value="ECO:0007669"/>
    <property type="project" value="InterPro"/>
</dbReference>
<dbReference type="GO" id="GO:1902259">
    <property type="term" value="P:regulation of delayed rectifier potassium channel activity"/>
    <property type="evidence" value="ECO:0000250"/>
    <property type="project" value="UniProtKB"/>
</dbReference>
<dbReference type="GO" id="GO:1901379">
    <property type="term" value="P:regulation of potassium ion transmembrane transport"/>
    <property type="evidence" value="ECO:0000250"/>
    <property type="project" value="UniProtKB"/>
</dbReference>
<dbReference type="CDD" id="cd19159">
    <property type="entry name" value="AKR_KCAB1B_AKR6A3-like"/>
    <property type="match status" value="1"/>
</dbReference>
<dbReference type="FunFam" id="3.20.20.100:FF:000001">
    <property type="entry name" value="voltage-gated potassium channel subunit beta-2 isoform X2"/>
    <property type="match status" value="1"/>
</dbReference>
<dbReference type="Gene3D" id="3.20.20.100">
    <property type="entry name" value="NADP-dependent oxidoreductase domain"/>
    <property type="match status" value="1"/>
</dbReference>
<dbReference type="InterPro" id="IPR005983">
    <property type="entry name" value="K_chnl_volt-dep_bsu_KCNAB"/>
</dbReference>
<dbReference type="InterPro" id="IPR005399">
    <property type="entry name" value="K_chnl_volt-dep_bsu_KCNAB-rel"/>
</dbReference>
<dbReference type="InterPro" id="IPR005400">
    <property type="entry name" value="K_chnl_volt-dep_bsu_KCNAB1"/>
</dbReference>
<dbReference type="InterPro" id="IPR023210">
    <property type="entry name" value="NADP_OxRdtase_dom"/>
</dbReference>
<dbReference type="InterPro" id="IPR036812">
    <property type="entry name" value="NADP_OxRdtase_dom_sf"/>
</dbReference>
<dbReference type="NCBIfam" id="TIGR01293">
    <property type="entry name" value="Kv_beta"/>
    <property type="match status" value="1"/>
</dbReference>
<dbReference type="PANTHER" id="PTHR43150">
    <property type="entry name" value="HYPERKINETIC, ISOFORM M"/>
    <property type="match status" value="1"/>
</dbReference>
<dbReference type="PANTHER" id="PTHR43150:SF7">
    <property type="entry name" value="VOLTAGE-GATED POTASSIUM CHANNEL SUBUNIT BETA-1"/>
    <property type="match status" value="1"/>
</dbReference>
<dbReference type="Pfam" id="PF00248">
    <property type="entry name" value="Aldo_ket_red"/>
    <property type="match status" value="1"/>
</dbReference>
<dbReference type="PRINTS" id="PR01578">
    <property type="entry name" value="KCNAB1CHANEL"/>
</dbReference>
<dbReference type="PRINTS" id="PR01577">
    <property type="entry name" value="KCNABCHANNEL"/>
</dbReference>
<dbReference type="SUPFAM" id="SSF51430">
    <property type="entry name" value="NAD(P)-linked oxidoreductase"/>
    <property type="match status" value="1"/>
</dbReference>
<proteinExistence type="evidence at transcript level"/>
<gene>
    <name type="primary">KCNAB1</name>
    <name type="synonym">KVB3</name>
</gene>
<keyword id="KW-1003">Cell membrane</keyword>
<keyword id="KW-0963">Cytoplasm</keyword>
<keyword id="KW-0406">Ion transport</keyword>
<keyword id="KW-0472">Membrane</keyword>
<keyword id="KW-0521">NADP</keyword>
<keyword id="KW-0560">Oxidoreductase</keyword>
<keyword id="KW-0630">Potassium</keyword>
<keyword id="KW-0633">Potassium transport</keyword>
<keyword id="KW-0813">Transport</keyword>
<feature type="chain" id="PRO_0000148741" description="Voltage-gated potassium channel subunit beta-1">
    <location>
        <begin position="1"/>
        <end position="408"/>
    </location>
</feature>
<feature type="active site" description="Proton donor/acceptor" evidence="1">
    <location>
        <position position="131"/>
    </location>
</feature>
<feature type="binding site" evidence="1">
    <location>
        <position position="97"/>
    </location>
    <ligand>
        <name>NADP(+)</name>
        <dbReference type="ChEBI" id="CHEBI:58349"/>
    </ligand>
</feature>
<feature type="binding site" evidence="1">
    <location>
        <position position="98"/>
    </location>
    <ligand>
        <name>NADP(+)</name>
        <dbReference type="ChEBI" id="CHEBI:58349"/>
    </ligand>
</feature>
<feature type="binding site" evidence="1">
    <location>
        <position position="104"/>
    </location>
    <ligand>
        <name>NADP(+)</name>
        <dbReference type="ChEBI" id="CHEBI:58349"/>
    </ligand>
</feature>
<feature type="binding site" evidence="1">
    <location>
        <position position="126"/>
    </location>
    <ligand>
        <name>NADP(+)</name>
        <dbReference type="ChEBI" id="CHEBI:58349"/>
    </ligand>
</feature>
<feature type="binding site" evidence="1">
    <location>
        <position position="199"/>
    </location>
    <ligand>
        <name>NADP(+)</name>
        <dbReference type="ChEBI" id="CHEBI:58349"/>
    </ligand>
</feature>
<feature type="binding site" evidence="1">
    <location>
        <position position="229"/>
    </location>
    <ligand>
        <name>NADP(+)</name>
        <dbReference type="ChEBI" id="CHEBI:58349"/>
    </ligand>
</feature>
<feature type="binding site" evidence="1">
    <location>
        <position position="230"/>
    </location>
    <ligand>
        <name>NADP(+)</name>
        <dbReference type="ChEBI" id="CHEBI:58349"/>
    </ligand>
</feature>
<feature type="binding site" evidence="1">
    <location>
        <position position="255"/>
    </location>
    <ligand>
        <name>NADP(+)</name>
        <dbReference type="ChEBI" id="CHEBI:58349"/>
    </ligand>
</feature>
<feature type="binding site" evidence="1">
    <location>
        <position position="284"/>
    </location>
    <ligand>
        <name>NADP(+)</name>
        <dbReference type="ChEBI" id="CHEBI:58349"/>
    </ligand>
</feature>
<feature type="binding site" evidence="1">
    <location>
        <position position="285"/>
    </location>
    <ligand>
        <name>NADP(+)</name>
        <dbReference type="ChEBI" id="CHEBI:58349"/>
    </ligand>
</feature>
<feature type="binding site" evidence="1">
    <location>
        <position position="286"/>
    </location>
    <ligand>
        <name>NADP(+)</name>
        <dbReference type="ChEBI" id="CHEBI:58349"/>
    </ligand>
</feature>
<feature type="binding site" evidence="1">
    <location>
        <position position="287"/>
    </location>
    <ligand>
        <name>NADP(+)</name>
        <dbReference type="ChEBI" id="CHEBI:58349"/>
    </ligand>
</feature>
<feature type="binding site" evidence="1">
    <location>
        <position position="288"/>
    </location>
    <ligand>
        <name>NADP(+)</name>
        <dbReference type="ChEBI" id="CHEBI:58349"/>
    </ligand>
</feature>
<feature type="binding site" evidence="1">
    <location>
        <position position="289"/>
    </location>
    <ligand>
        <name>NADP(+)</name>
        <dbReference type="ChEBI" id="CHEBI:58349"/>
    </ligand>
</feature>
<feature type="binding site" evidence="1">
    <location>
        <position position="295"/>
    </location>
    <ligand>
        <name>NADP(+)</name>
        <dbReference type="ChEBI" id="CHEBI:58349"/>
    </ligand>
</feature>
<feature type="binding site" evidence="1">
    <location>
        <position position="305"/>
    </location>
    <ligand>
        <name>NADP(+)</name>
        <dbReference type="ChEBI" id="CHEBI:58349"/>
    </ligand>
</feature>
<feature type="binding site" evidence="1">
    <location>
        <position position="364"/>
    </location>
    <ligand>
        <name>NADP(+)</name>
        <dbReference type="ChEBI" id="CHEBI:58349"/>
    </ligand>
</feature>
<feature type="binding site" evidence="1">
    <location>
        <position position="366"/>
    </location>
    <ligand>
        <name>NADP(+)</name>
        <dbReference type="ChEBI" id="CHEBI:58349"/>
    </ligand>
</feature>
<feature type="binding site" evidence="1">
    <location>
        <position position="370"/>
    </location>
    <ligand>
        <name>NADP(+)</name>
        <dbReference type="ChEBI" id="CHEBI:58349"/>
    </ligand>
</feature>
<feature type="binding site" evidence="1">
    <location>
        <position position="373"/>
    </location>
    <ligand>
        <name>NADP(+)</name>
        <dbReference type="ChEBI" id="CHEBI:58349"/>
    </ligand>
</feature>
<feature type="binding site" evidence="1">
    <location>
        <position position="374"/>
    </location>
    <ligand>
        <name>NADP(+)</name>
        <dbReference type="ChEBI" id="CHEBI:58349"/>
    </ligand>
</feature>
<comment type="function">
    <text evidence="2 3 4">Regulatory subunit of the voltage-gated potassium (Kv) Shaker channels composed of pore-forming and potassium-conducting alpha subunits and of regulatory beta subunits. The beta-1/KCNAB1 cytoplasmic subunit mediates closure of delayed rectifier potassium channels by physically obstructing the pore via its N-terminal domain and increases the speed of channel closure for other family members (By similarity). Promotes the inactivation of Kv1.1/KCNA1, Kv1.2/KCNA2, Kv1.4/KCNA4, Kv1.5/KCNA5 and Kv1.6/KCNA6 alpha subunit-containing channels (PubMed:7890764). Displays nicotinamide adenine dinucleotide phosphate (NADPH)-dependent aldoketoreductase activity by catalyzing the NADPH-dependent reduction of a variety of endogenous aldehydes and ketones (By similarity). The binding of NADPH is required for efficient down-regulation of potassium channel activity (PubMed:7890764). Oxidation of the bound NADPH restrains N-terminal domain from blocking the channel, thereby decreasing N-type inactivation of potassium channel activity (By similarity).</text>
</comment>
<comment type="catalytic activity">
    <reaction evidence="2">
        <text>a primary alcohol + NADP(+) = an aldehyde + NADPH + H(+)</text>
        <dbReference type="Rhea" id="RHEA:15937"/>
        <dbReference type="ChEBI" id="CHEBI:15378"/>
        <dbReference type="ChEBI" id="CHEBI:15734"/>
        <dbReference type="ChEBI" id="CHEBI:17478"/>
        <dbReference type="ChEBI" id="CHEBI:57783"/>
        <dbReference type="ChEBI" id="CHEBI:58349"/>
    </reaction>
    <physiologicalReaction direction="right-to-left" evidence="2">
        <dbReference type="Rhea" id="RHEA:15939"/>
    </physiologicalReaction>
</comment>
<comment type="catalytic activity">
    <reaction evidence="2">
        <text>a secondary alcohol + NADP(+) = a ketone + NADPH + H(+)</text>
        <dbReference type="Rhea" id="RHEA:19257"/>
        <dbReference type="ChEBI" id="CHEBI:15378"/>
        <dbReference type="ChEBI" id="CHEBI:17087"/>
        <dbReference type="ChEBI" id="CHEBI:35681"/>
        <dbReference type="ChEBI" id="CHEBI:57783"/>
        <dbReference type="ChEBI" id="CHEBI:58349"/>
    </reaction>
    <physiologicalReaction direction="right-to-left" evidence="2">
        <dbReference type="Rhea" id="RHEA:19259"/>
    </physiologicalReaction>
</comment>
<comment type="subunit">
    <text evidence="2 3 5">Homotetramer (By similarity). Interaction with tetrameric potassium channel alpha subunits gives rise to a heterooctamer (Probable). Identified in potassium channel complexes containing KCNA1, KCNA2, KCNA4, KCNA5, KCNA6, KCNAB1 and KCNAB2 (By similarity). Part of a complex containing KCNA1, KCNA4 and LGI1; interaction with LGI1 inhibits down-regulation of KCNA1 channel activity. Interacts with the dimer formed by GNB1 and GNG2; this enhances KCNA1 binding. Interacts with SQSTM1 (By similarity).</text>
</comment>
<comment type="subcellular location">
    <subcellularLocation>
        <location evidence="3">Cytoplasm</location>
    </subcellularLocation>
    <subcellularLocation>
        <location evidence="2">Membrane</location>
        <topology evidence="2">Peripheral membrane protein</topology>
        <orientation evidence="2">Cytoplasmic side</orientation>
    </subcellularLocation>
    <subcellularLocation>
        <location evidence="3">Cell membrane</location>
        <topology evidence="3">Peripheral membrane protein</topology>
        <orientation evidence="3">Cytoplasmic side</orientation>
    </subcellularLocation>
    <text evidence="3">Recruited to the cytoplasmic side of the cell membrane via its interaction with pore-forming potassium channel alpha subunits.</text>
</comment>
<comment type="tissue specificity">
    <text evidence="4">Expression most abundant in aorta. Also high in left ventricle. Also detected in right ventricle, atrium, brain, skeletal muscle and kidney. Not detected in liver.</text>
</comment>
<comment type="domain">
    <text evidence="2">The N-terminal domain of the beta subunit mediates closure of delayed rectifier potassium channels by physically obstructing the pore.</text>
</comment>
<comment type="similarity">
    <text evidence="5">Belongs to the shaker potassium channel beta subunit family.</text>
</comment>
<protein>
    <recommendedName>
        <fullName>Voltage-gated potassium channel subunit beta-1</fullName>
        <ecNumber evidence="2">1.1.1.-</ecNumber>
    </recommendedName>
    <alternativeName>
        <fullName>K(+) channel subunit beta-1</fullName>
    </alternativeName>
    <alternativeName>
        <fullName>Kv-beta-1</fullName>
    </alternativeName>
</protein>
<sequence>MHLYKPACADIPSPKLGLPKSSESALKCRRHLAVTKPPPQAACWPARPSGAAERKFLEKFLRVHGISLQETTRAETGMAYRNLGKSGLRVSCLGLGTWVTFGGQISDEVAERLMTIAYESGVNLFDTAEVYAAGKAEVILGSIIKKKGWRRSSLVITTKLYWGGKAETERGLSRKHIIEGLKGSLQRLQLEYVDVVFANRPDSNTPMEEIVRAMTHVINQGMAMYWGTSRWSAMEIMEAYSVARQFNMIPPVCEQAEYHLFQREKVEVQLPELYHKIGVGAMTWSPLACGIISGKYGNGVPESSRASLKCYQWLKERIVSEEGRKQQNKLKDLSPIAERLGCTLPQLAVAWCLRNEGVSSVLLGSSTPEQLIENLGAIQVLPKMTSHVVNEIDNILRNKPYSKKDYRS</sequence>
<evidence type="ECO:0000250" key="1">
    <source>
        <dbReference type="UniProtKB" id="P62483"/>
    </source>
</evidence>
<evidence type="ECO:0000250" key="2">
    <source>
        <dbReference type="UniProtKB" id="P63144"/>
    </source>
</evidence>
<evidence type="ECO:0000250" key="3">
    <source>
        <dbReference type="UniProtKB" id="Q14722"/>
    </source>
</evidence>
<evidence type="ECO:0000269" key="4">
    <source>
    </source>
</evidence>
<evidence type="ECO:0000305" key="5"/>
<accession>Q28528</accession>
<organism>
    <name type="scientific">Mustela putorius</name>
    <name type="common">European polecat</name>
    <dbReference type="NCBI Taxonomy" id="9668"/>
    <lineage>
        <taxon>Eukaryota</taxon>
        <taxon>Metazoa</taxon>
        <taxon>Chordata</taxon>
        <taxon>Craniata</taxon>
        <taxon>Vertebrata</taxon>
        <taxon>Euteleostomi</taxon>
        <taxon>Mammalia</taxon>
        <taxon>Eutheria</taxon>
        <taxon>Laurasiatheria</taxon>
        <taxon>Carnivora</taxon>
        <taxon>Caniformia</taxon>
        <taxon>Musteloidea</taxon>
        <taxon>Mustelidae</taxon>
        <taxon>Mustelinae</taxon>
        <taxon>Mustela</taxon>
    </lineage>
</organism>
<name>KCAB1_MUSPU</name>